<evidence type="ECO:0000250" key="1"/>
<evidence type="ECO:0000250" key="2">
    <source>
        <dbReference type="UniProtKB" id="P00924"/>
    </source>
</evidence>
<evidence type="ECO:0000250" key="3">
    <source>
        <dbReference type="UniProtKB" id="P06733"/>
    </source>
</evidence>
<evidence type="ECO:0000250" key="4">
    <source>
        <dbReference type="UniProtKB" id="P17182"/>
    </source>
</evidence>
<evidence type="ECO:0000305" key="5"/>
<sequence>MSILKVHAREIFDSRGNPTVEVDLFTSKGLFRAAVPSGASTGIYEALELRDNDKTRYMGKGVSKAVEHINKTIAPALVSKKLNVTEQEKIDKLMIEMDGTENKSKFGANAILGVSLAVCKAGAVEKGVPLYRHIADLAGNSEVILPVPAFNVINGGSHAGNKLAMQEFMILPVGAANFREAMRIGAEVYHNLKNVIKEKYGKDATNVGDEGGFAPNILENKEGLELLKTAIGKAGYTDKVVIGMDVAASEFFRSGKYDLDFKSPDDPSRYISPDQLADLYKSFIKDYPVVSIEDPFDQDDWGAWQKFTASAGIQVVGDDLTVANPKRIAKAVNEKSCNCLLLKVNQIGSVTESLQACKLAQANGWGVMVSHRSGETEDTFIADLVVGLCTGQIKTGAPCRSERLAKYNQLLRIEEELGSKAKFAGRNFRNPLAK</sequence>
<comment type="function">
    <text evidence="3">Glycolytic enzyme the catalyzes the conversion of 2-phosphoglycerate to phosphoenolpyruvate. In addition to glycolysis, involved in various processes such as growth control, hypoxia tolerance and allergic responses. May also function in the intravascular and pericellular fibrinolytic system due to its ability to serve as a receptor and activator of plasminogen on the cell surface of several cell-types such as leukocytes and neurons. Stimulates immunoglobulin production.</text>
</comment>
<comment type="catalytic activity">
    <reaction evidence="3">
        <text>(2R)-2-phosphoglycerate = phosphoenolpyruvate + H2O</text>
        <dbReference type="Rhea" id="RHEA:10164"/>
        <dbReference type="ChEBI" id="CHEBI:15377"/>
        <dbReference type="ChEBI" id="CHEBI:58289"/>
        <dbReference type="ChEBI" id="CHEBI:58702"/>
        <dbReference type="EC" id="4.2.1.11"/>
    </reaction>
</comment>
<comment type="cofactor">
    <cofactor evidence="3">
        <name>Mg(2+)</name>
        <dbReference type="ChEBI" id="CHEBI:18420"/>
    </cofactor>
    <text evidence="3">Binds two Mg(2+) per subunit. Required for catalysis and for stabilizing the dimer.</text>
</comment>
<comment type="pathway">
    <text>Carbohydrate degradation; glycolysis; pyruvate from D-glyceraldehyde 3-phosphate: step 4/5.</text>
</comment>
<comment type="subunit">
    <text evidence="3 4">Mammalian enolase is composed of 3 isozyme subunits, alpha, beta and gamma, which can form homodimers or heterodimers which are cell-type and development-specific. ENO1 interacts with PLG in the neuronal plasma membrane and promotes its activation. The C-terminal lysine is required for this binding. Interacts with ENO4 and PGAM2 (By similarity). Interacts with CMTM6 (By similarity).</text>
</comment>
<comment type="subcellular location">
    <subcellularLocation>
        <location evidence="1">Cytoplasm</location>
    </subcellularLocation>
    <subcellularLocation>
        <location evidence="1">Cell membrane</location>
    </subcellularLocation>
    <text evidence="1">Can translocate to the plasma membrane in either the homodimeric (alpha/alpha) or heterodimeric (alpha/gamma) form. ENO1 is localized to the M-band.</text>
</comment>
<comment type="PTM">
    <text evidence="3">ISGylated.</text>
</comment>
<comment type="PTM">
    <text evidence="3">Lysine 2-hydroxyisobutyrylation (Khib) by p300/EP300 activates the phosphopyruvate hydratase activity.</text>
</comment>
<comment type="similarity">
    <text evidence="5">Belongs to the enolase family.</text>
</comment>
<name>ENOA_MACFA</name>
<proteinExistence type="evidence at transcript level"/>
<organism>
    <name type="scientific">Macaca fascicularis</name>
    <name type="common">Crab-eating macaque</name>
    <name type="synonym">Cynomolgus monkey</name>
    <dbReference type="NCBI Taxonomy" id="9541"/>
    <lineage>
        <taxon>Eukaryota</taxon>
        <taxon>Metazoa</taxon>
        <taxon>Chordata</taxon>
        <taxon>Craniata</taxon>
        <taxon>Vertebrata</taxon>
        <taxon>Euteleostomi</taxon>
        <taxon>Mammalia</taxon>
        <taxon>Eutheria</taxon>
        <taxon>Euarchontoglires</taxon>
        <taxon>Primates</taxon>
        <taxon>Haplorrhini</taxon>
        <taxon>Catarrhini</taxon>
        <taxon>Cercopithecidae</taxon>
        <taxon>Cercopithecinae</taxon>
        <taxon>Macaca</taxon>
    </lineage>
</organism>
<protein>
    <recommendedName>
        <fullName>Alpha-enolase</fullName>
        <ecNumber>4.2.1.11</ecNumber>
    </recommendedName>
    <alternativeName>
        <fullName>2-phospho-D-glycerate hydro-lyase</fullName>
    </alternativeName>
    <alternativeName>
        <fullName>Enolase 1</fullName>
    </alternativeName>
    <alternativeName>
        <fullName>Non-neural enolase</fullName>
        <shortName>NNE</shortName>
    </alternativeName>
</protein>
<keyword id="KW-0007">Acetylation</keyword>
<keyword id="KW-1003">Cell membrane</keyword>
<keyword id="KW-0963">Cytoplasm</keyword>
<keyword id="KW-0324">Glycolysis</keyword>
<keyword id="KW-0379">Hydroxylation</keyword>
<keyword id="KW-1017">Isopeptide bond</keyword>
<keyword id="KW-0456">Lyase</keyword>
<keyword id="KW-0460">Magnesium</keyword>
<keyword id="KW-0472">Membrane</keyword>
<keyword id="KW-0479">Metal-binding</keyword>
<keyword id="KW-0597">Phosphoprotein</keyword>
<keyword id="KW-1185">Reference proteome</keyword>
<keyword id="KW-0832">Ubl conjugation</keyword>
<dbReference type="EC" id="4.2.1.11"/>
<dbReference type="EMBL" id="AB169531">
    <property type="protein sequence ID" value="BAE01613.1"/>
    <property type="molecule type" value="mRNA"/>
</dbReference>
<dbReference type="RefSeq" id="NP_001270890.1">
    <property type="nucleotide sequence ID" value="NM_001283961.1"/>
</dbReference>
<dbReference type="SMR" id="Q4R5L2"/>
<dbReference type="STRING" id="9541.ENSMFAP00000029406"/>
<dbReference type="eggNOG" id="KOG2670">
    <property type="taxonomic scope" value="Eukaryota"/>
</dbReference>
<dbReference type="UniPathway" id="UPA00109">
    <property type="reaction ID" value="UER00187"/>
</dbReference>
<dbReference type="Proteomes" id="UP000233100">
    <property type="component" value="Unplaced"/>
</dbReference>
<dbReference type="GO" id="GO:0000015">
    <property type="term" value="C:phosphopyruvate hydratase complex"/>
    <property type="evidence" value="ECO:0007669"/>
    <property type="project" value="InterPro"/>
</dbReference>
<dbReference type="GO" id="GO:0005886">
    <property type="term" value="C:plasma membrane"/>
    <property type="evidence" value="ECO:0007669"/>
    <property type="project" value="UniProtKB-SubCell"/>
</dbReference>
<dbReference type="GO" id="GO:0000287">
    <property type="term" value="F:magnesium ion binding"/>
    <property type="evidence" value="ECO:0007669"/>
    <property type="project" value="InterPro"/>
</dbReference>
<dbReference type="GO" id="GO:0004634">
    <property type="term" value="F:phosphopyruvate hydratase activity"/>
    <property type="evidence" value="ECO:0000250"/>
    <property type="project" value="UniProtKB"/>
</dbReference>
<dbReference type="GO" id="GO:0061621">
    <property type="term" value="P:canonical glycolysis"/>
    <property type="evidence" value="ECO:0000250"/>
    <property type="project" value="UniProtKB"/>
</dbReference>
<dbReference type="CDD" id="cd03313">
    <property type="entry name" value="enolase"/>
    <property type="match status" value="1"/>
</dbReference>
<dbReference type="FunFam" id="3.30.390.10:FF:000001">
    <property type="entry name" value="Enolase"/>
    <property type="match status" value="1"/>
</dbReference>
<dbReference type="FunFam" id="3.20.20.120:FF:000002">
    <property type="entry name" value="Enolase 1"/>
    <property type="match status" value="1"/>
</dbReference>
<dbReference type="Gene3D" id="3.20.20.120">
    <property type="entry name" value="Enolase-like C-terminal domain"/>
    <property type="match status" value="1"/>
</dbReference>
<dbReference type="Gene3D" id="3.30.390.10">
    <property type="entry name" value="Enolase-like, N-terminal domain"/>
    <property type="match status" value="1"/>
</dbReference>
<dbReference type="HAMAP" id="MF_00318">
    <property type="entry name" value="Enolase"/>
    <property type="match status" value="1"/>
</dbReference>
<dbReference type="InterPro" id="IPR000941">
    <property type="entry name" value="Enolase"/>
</dbReference>
<dbReference type="InterPro" id="IPR036849">
    <property type="entry name" value="Enolase-like_C_sf"/>
</dbReference>
<dbReference type="InterPro" id="IPR029017">
    <property type="entry name" value="Enolase-like_N"/>
</dbReference>
<dbReference type="InterPro" id="IPR020810">
    <property type="entry name" value="Enolase_C"/>
</dbReference>
<dbReference type="InterPro" id="IPR020809">
    <property type="entry name" value="Enolase_CS"/>
</dbReference>
<dbReference type="InterPro" id="IPR020811">
    <property type="entry name" value="Enolase_N"/>
</dbReference>
<dbReference type="NCBIfam" id="TIGR01060">
    <property type="entry name" value="eno"/>
    <property type="match status" value="1"/>
</dbReference>
<dbReference type="PANTHER" id="PTHR11902:SF12">
    <property type="entry name" value="ALPHA-ENOLASE"/>
    <property type="match status" value="1"/>
</dbReference>
<dbReference type="PANTHER" id="PTHR11902">
    <property type="entry name" value="ENOLASE"/>
    <property type="match status" value="1"/>
</dbReference>
<dbReference type="Pfam" id="PF00113">
    <property type="entry name" value="Enolase_C"/>
    <property type="match status" value="1"/>
</dbReference>
<dbReference type="Pfam" id="PF03952">
    <property type="entry name" value="Enolase_N"/>
    <property type="match status" value="1"/>
</dbReference>
<dbReference type="PIRSF" id="PIRSF001400">
    <property type="entry name" value="Enolase"/>
    <property type="match status" value="1"/>
</dbReference>
<dbReference type="PRINTS" id="PR00148">
    <property type="entry name" value="ENOLASE"/>
</dbReference>
<dbReference type="SFLD" id="SFLDS00001">
    <property type="entry name" value="Enolase"/>
    <property type="match status" value="1"/>
</dbReference>
<dbReference type="SFLD" id="SFLDF00002">
    <property type="entry name" value="enolase"/>
    <property type="match status" value="1"/>
</dbReference>
<dbReference type="SMART" id="SM01192">
    <property type="entry name" value="Enolase_C"/>
    <property type="match status" value="1"/>
</dbReference>
<dbReference type="SMART" id="SM01193">
    <property type="entry name" value="Enolase_N"/>
    <property type="match status" value="1"/>
</dbReference>
<dbReference type="SUPFAM" id="SSF51604">
    <property type="entry name" value="Enolase C-terminal domain-like"/>
    <property type="match status" value="1"/>
</dbReference>
<dbReference type="SUPFAM" id="SSF54826">
    <property type="entry name" value="Enolase N-terminal domain-like"/>
    <property type="match status" value="1"/>
</dbReference>
<dbReference type="PROSITE" id="PS00164">
    <property type="entry name" value="ENOLASE"/>
    <property type="match status" value="1"/>
</dbReference>
<feature type="initiator methionine" description="Removed" evidence="3">
    <location>
        <position position="1"/>
    </location>
</feature>
<feature type="chain" id="PRO_0000292944" description="Alpha-enolase">
    <location>
        <begin position="2"/>
        <end position="434"/>
    </location>
</feature>
<feature type="region of interest" description="Required for interaction with PLG">
    <location>
        <begin position="405"/>
        <end position="434"/>
    </location>
</feature>
<feature type="active site" description="Proton donor" evidence="2">
    <location>
        <position position="210"/>
    </location>
</feature>
<feature type="active site" description="Proton acceptor" evidence="2">
    <location>
        <position position="343"/>
    </location>
</feature>
<feature type="binding site" evidence="3">
    <location>
        <position position="40"/>
    </location>
    <ligand>
        <name>Mg(2+)</name>
        <dbReference type="ChEBI" id="CHEBI:18420"/>
        <label>1</label>
    </ligand>
</feature>
<feature type="binding site" evidence="2">
    <location>
        <position position="158"/>
    </location>
    <ligand>
        <name>substrate</name>
    </ligand>
</feature>
<feature type="binding site" evidence="2">
    <location>
        <position position="167"/>
    </location>
    <ligand>
        <name>substrate</name>
    </ligand>
</feature>
<feature type="binding site" evidence="3">
    <location>
        <position position="245"/>
    </location>
    <ligand>
        <name>Mg(2+)</name>
        <dbReference type="ChEBI" id="CHEBI:18420"/>
        <label>2</label>
    </ligand>
</feature>
<feature type="binding site" evidence="3">
    <location>
        <position position="293"/>
    </location>
    <ligand>
        <name>Mg(2+)</name>
        <dbReference type="ChEBI" id="CHEBI:18420"/>
        <label>2</label>
    </ligand>
</feature>
<feature type="binding site" evidence="2">
    <location>
        <position position="293"/>
    </location>
    <ligand>
        <name>substrate</name>
    </ligand>
</feature>
<feature type="binding site" evidence="3">
    <location>
        <position position="318"/>
    </location>
    <ligand>
        <name>Mg(2+)</name>
        <dbReference type="ChEBI" id="CHEBI:18420"/>
        <label>2</label>
    </ligand>
</feature>
<feature type="binding site" evidence="2">
    <location>
        <position position="318"/>
    </location>
    <ligand>
        <name>substrate</name>
    </ligand>
</feature>
<feature type="binding site" evidence="2">
    <location>
        <begin position="370"/>
        <end position="373"/>
    </location>
    <ligand>
        <name>substrate</name>
    </ligand>
</feature>
<feature type="binding site" evidence="2">
    <location>
        <position position="394"/>
    </location>
    <ligand>
        <name>substrate</name>
    </ligand>
</feature>
<feature type="modified residue" description="N-acetylserine" evidence="3">
    <location>
        <position position="2"/>
    </location>
</feature>
<feature type="modified residue" description="N6-acetyllysine" evidence="3">
    <location>
        <position position="5"/>
    </location>
</feature>
<feature type="modified residue" description="Phosphoserine" evidence="3">
    <location>
        <position position="27"/>
    </location>
</feature>
<feature type="modified residue" description="Phosphotyrosine" evidence="3">
    <location>
        <position position="44"/>
    </location>
</feature>
<feature type="modified residue" description="N6-acetyllysine; alternate" evidence="4">
    <location>
        <position position="60"/>
    </location>
</feature>
<feature type="modified residue" description="N6-succinyllysine; alternate" evidence="4">
    <location>
        <position position="60"/>
    </location>
</feature>
<feature type="modified residue" description="N6-acetyllysine" evidence="3">
    <location>
        <position position="64"/>
    </location>
</feature>
<feature type="modified residue" description="N6-acetyllysine" evidence="3">
    <location>
        <position position="71"/>
    </location>
</feature>
<feature type="modified residue" description="N6-acetyllysine; alternate" evidence="3">
    <location>
        <position position="89"/>
    </location>
</feature>
<feature type="modified residue" description="N6-succinyllysine; alternate" evidence="4">
    <location>
        <position position="89"/>
    </location>
</feature>
<feature type="modified residue" description="N6-acetyllysine" evidence="4">
    <location>
        <position position="92"/>
    </location>
</feature>
<feature type="modified residue" description="N6-acetyllysine" evidence="3">
    <location>
        <position position="126"/>
    </location>
</feature>
<feature type="modified residue" description="N6-acetyllysine" evidence="3">
    <location>
        <position position="193"/>
    </location>
</feature>
<feature type="modified residue" description="N6-acetyllysine" evidence="3">
    <location>
        <position position="199"/>
    </location>
</feature>
<feature type="modified residue" description="N6-acetyllysine; alternate" evidence="4">
    <location>
        <position position="202"/>
    </location>
</feature>
<feature type="modified residue" description="N6-(2-hydroxyisobutyryl)lysine; alternate" evidence="3">
    <location>
        <position position="228"/>
    </location>
</feature>
<feature type="modified residue" description="N6-acetyllysine; alternate" evidence="3">
    <location>
        <position position="228"/>
    </location>
</feature>
<feature type="modified residue" description="N6-succinyllysine; alternate" evidence="4">
    <location>
        <position position="228"/>
    </location>
</feature>
<feature type="modified residue" description="N6-acetyllysine; alternate" evidence="3">
    <location>
        <position position="233"/>
    </location>
</feature>
<feature type="modified residue" description="N6-malonyllysine; alternate" evidence="1">
    <location>
        <position position="233"/>
    </location>
</feature>
<feature type="modified residue" description="Phosphoserine" evidence="3">
    <location>
        <position position="254"/>
    </location>
</feature>
<feature type="modified residue" description="N6-acetyllysine" evidence="3">
    <location>
        <position position="256"/>
    </location>
</feature>
<feature type="modified residue" description="Phosphoserine" evidence="3">
    <location>
        <position position="263"/>
    </location>
</feature>
<feature type="modified residue" description="Phosphoserine" evidence="3">
    <location>
        <position position="272"/>
    </location>
</feature>
<feature type="modified residue" description="N6-(2-hydroxyisobutyryl)lysine; alternate" evidence="3">
    <location>
        <position position="281"/>
    </location>
</feature>
<feature type="modified residue" description="N6-acetyllysine; alternate" evidence="3">
    <location>
        <position position="281"/>
    </location>
</feature>
<feature type="modified residue" description="N6-acetyllysine" evidence="3">
    <location>
        <position position="285"/>
    </location>
</feature>
<feature type="modified residue" description="Phosphotyrosine" evidence="3">
    <location>
        <position position="287"/>
    </location>
</feature>
<feature type="modified residue" description="Phosphoserine" evidence="3">
    <location>
        <position position="291"/>
    </location>
</feature>
<feature type="modified residue" description="N6-acetyllysine" evidence="4">
    <location>
        <position position="335"/>
    </location>
</feature>
<feature type="modified residue" description="N6-acetyllysine" evidence="4">
    <location>
        <position position="343"/>
    </location>
</feature>
<feature type="modified residue" description="N6-acetyllysine" evidence="4">
    <location>
        <position position="406"/>
    </location>
</feature>
<feature type="modified residue" description="N6-acetyllysine; alternate" evidence="3">
    <location>
        <position position="420"/>
    </location>
</feature>
<feature type="modified residue" description="N6-malonyllysine; alternate" evidence="1">
    <location>
        <position position="420"/>
    </location>
</feature>
<feature type="modified residue" description="N6-succinyllysine; alternate" evidence="4">
    <location>
        <position position="420"/>
    </location>
</feature>
<feature type="cross-link" description="Glycyl lysine isopeptide (Lys-Gly) (interchain with G-Cter in SUMO2); alternate" evidence="3">
    <location>
        <position position="202"/>
    </location>
</feature>
<reference key="1">
    <citation type="submission" date="2005-06" db="EMBL/GenBank/DDBJ databases">
        <title>DNA sequences of macaque genes expressed in brain or testis and its evolutionary implications.</title>
        <authorList>
            <consortium name="International consortium for macaque cDNA sequencing and analysis"/>
        </authorList>
    </citation>
    <scope>NUCLEOTIDE SEQUENCE [LARGE SCALE MRNA]</scope>
    <source>
        <tissue>Brain cortex</tissue>
    </source>
</reference>
<accession>Q4R5L2</accession>
<gene>
    <name type="primary">ENO1</name>
    <name type="ORF">QccE-14518</name>
</gene>